<protein>
    <recommendedName>
        <fullName evidence="1">Tryptophan 2,3-dioxygenase</fullName>
        <shortName evidence="1">TDO</shortName>
        <ecNumber evidence="1">1.13.11.11</ecNumber>
    </recommendedName>
    <alternativeName>
        <fullName evidence="1">Tryptamin 2,3-dioxygenase</fullName>
    </alternativeName>
    <alternativeName>
        <fullName evidence="1">Tryptophan oxygenase</fullName>
        <shortName evidence="1">TO</shortName>
        <shortName evidence="1">TRPO</shortName>
    </alternativeName>
    <alternativeName>
        <fullName evidence="1">Tryptophan pyrrolase</fullName>
    </alternativeName>
    <alternativeName>
        <fullName evidence="1">Tryptophanase</fullName>
    </alternativeName>
</protein>
<name>T23O_XANE5</name>
<proteinExistence type="inferred from homology"/>
<dbReference type="EC" id="1.13.11.11" evidence="1"/>
<dbReference type="EMBL" id="AM039952">
    <property type="protein sequence ID" value="CAJ22109.1"/>
    <property type="status" value="ALT_INIT"/>
    <property type="molecule type" value="Genomic_DNA"/>
</dbReference>
<dbReference type="RefSeq" id="WP_008575535.1">
    <property type="nucleotide sequence ID" value="NZ_CP017190.1"/>
</dbReference>
<dbReference type="SMR" id="Q3BYF4"/>
<dbReference type="KEGG" id="xcv:XCV0478"/>
<dbReference type="eggNOG" id="COG3483">
    <property type="taxonomic scope" value="Bacteria"/>
</dbReference>
<dbReference type="HOGENOM" id="CLU_063240_0_0_6"/>
<dbReference type="UniPathway" id="UPA00333">
    <property type="reaction ID" value="UER00453"/>
</dbReference>
<dbReference type="Proteomes" id="UP000007069">
    <property type="component" value="Chromosome"/>
</dbReference>
<dbReference type="GO" id="GO:0020037">
    <property type="term" value="F:heme binding"/>
    <property type="evidence" value="ECO:0000250"/>
    <property type="project" value="UniProtKB"/>
</dbReference>
<dbReference type="GO" id="GO:0046872">
    <property type="term" value="F:metal ion binding"/>
    <property type="evidence" value="ECO:0007669"/>
    <property type="project" value="UniProtKB-KW"/>
</dbReference>
<dbReference type="GO" id="GO:0004833">
    <property type="term" value="F:tryptophan 2,3-dioxygenase activity"/>
    <property type="evidence" value="ECO:0000250"/>
    <property type="project" value="UniProtKB"/>
</dbReference>
<dbReference type="GO" id="GO:0019442">
    <property type="term" value="P:L-tryptophan catabolic process to acetyl-CoA"/>
    <property type="evidence" value="ECO:0007669"/>
    <property type="project" value="TreeGrafter"/>
</dbReference>
<dbReference type="GO" id="GO:0019441">
    <property type="term" value="P:L-tryptophan catabolic process to kynurenine"/>
    <property type="evidence" value="ECO:0000250"/>
    <property type="project" value="UniProtKB"/>
</dbReference>
<dbReference type="FunFam" id="1.20.58.480:FF:000001">
    <property type="entry name" value="Tryptophan 2,3-dioxygenase"/>
    <property type="match status" value="1"/>
</dbReference>
<dbReference type="Gene3D" id="1.20.58.480">
    <property type="match status" value="1"/>
</dbReference>
<dbReference type="HAMAP" id="MF_01972">
    <property type="entry name" value="T23O"/>
    <property type="match status" value="1"/>
</dbReference>
<dbReference type="InterPro" id="IPR037217">
    <property type="entry name" value="Trp/Indoleamine_2_3_dOase-like"/>
</dbReference>
<dbReference type="InterPro" id="IPR004981">
    <property type="entry name" value="Trp_2_3_dOase"/>
</dbReference>
<dbReference type="PANTHER" id="PTHR10138">
    <property type="entry name" value="TRYPTOPHAN 2,3-DIOXYGENASE"/>
    <property type="match status" value="1"/>
</dbReference>
<dbReference type="PANTHER" id="PTHR10138:SF0">
    <property type="entry name" value="TRYPTOPHAN 2,3-DIOXYGENASE"/>
    <property type="match status" value="1"/>
</dbReference>
<dbReference type="Pfam" id="PF03301">
    <property type="entry name" value="Trp_dioxygenase"/>
    <property type="match status" value="2"/>
</dbReference>
<dbReference type="SUPFAM" id="SSF140959">
    <property type="entry name" value="Indolic compounds 2,3-dioxygenase-like"/>
    <property type="match status" value="1"/>
</dbReference>
<gene>
    <name evidence="1" type="primary">kynA</name>
    <name type="ordered locus">XCV0478</name>
</gene>
<sequence>MPVDKNLRDLEPGIHTDLEGRLTYGGYLRLDQLLSAQQPLSEPAHHDEMLFIIQHQTSELWLKLLAHELRAAIVHLQRDEVWQCRKVLARSKQVLRQLTEQWSVLETLTPSEYMGFRDVLGPSSGFQSLQYRYIEFLLGNKNPQMLQVFAYDPHGQARLREALEAPSLYEEFLRYLARFGHAIPQHYQARDWTAAHVADDSLRPVFERIYENTDRYWREYALCEDLVDVETQFQLWRFRHMRTVMRVIGFKRGTGGSSGVGFLQQALALTFFPELFDVRTSVGVDGRPPQGAPDAAQG</sequence>
<comment type="function">
    <text evidence="1">Heme-dependent dioxygenase that catalyzes the oxidative cleavage of the L-tryptophan (L-Trp) pyrrole ring and converts L-tryptophan to N-formyl-L-kynurenine. Catalyzes the oxidative cleavage of the indole moiety.</text>
</comment>
<comment type="catalytic activity">
    <reaction evidence="1">
        <text>L-tryptophan + O2 = N-formyl-L-kynurenine</text>
        <dbReference type="Rhea" id="RHEA:24536"/>
        <dbReference type="ChEBI" id="CHEBI:15379"/>
        <dbReference type="ChEBI" id="CHEBI:57912"/>
        <dbReference type="ChEBI" id="CHEBI:58629"/>
        <dbReference type="EC" id="1.13.11.11"/>
    </reaction>
</comment>
<comment type="cofactor">
    <cofactor evidence="1">
        <name>heme</name>
        <dbReference type="ChEBI" id="CHEBI:30413"/>
    </cofactor>
    <text evidence="1">Binds 1 heme group per subunit.</text>
</comment>
<comment type="pathway">
    <text evidence="1">Amino-acid degradation; L-tryptophan degradation via kynurenine pathway; L-kynurenine from L-tryptophan: step 1/2.</text>
</comment>
<comment type="subunit">
    <text evidence="1">Homotetramer.</text>
</comment>
<comment type="similarity">
    <text evidence="1">Belongs to the tryptophan 2,3-dioxygenase family.</text>
</comment>
<comment type="sequence caution" evidence="2">
    <conflict type="erroneous initiation">
        <sequence resource="EMBL-CDS" id="CAJ22109"/>
    </conflict>
</comment>
<feature type="chain" id="PRO_0000360140" description="Tryptophan 2,3-dioxygenase">
    <location>
        <begin position="1"/>
        <end position="298"/>
    </location>
</feature>
<feature type="binding site" evidence="1">
    <location>
        <begin position="51"/>
        <end position="55"/>
    </location>
    <ligand>
        <name>substrate</name>
    </ligand>
</feature>
<feature type="binding site" evidence="1">
    <location>
        <position position="113"/>
    </location>
    <ligand>
        <name>substrate</name>
    </ligand>
</feature>
<feature type="binding site" evidence="1">
    <location>
        <position position="117"/>
    </location>
    <ligand>
        <name>substrate</name>
    </ligand>
</feature>
<feature type="binding site" description="axial binding residue" evidence="1">
    <location>
        <position position="240"/>
    </location>
    <ligand>
        <name>heme</name>
        <dbReference type="ChEBI" id="CHEBI:30413"/>
    </ligand>
    <ligandPart>
        <name>Fe</name>
        <dbReference type="ChEBI" id="CHEBI:18248"/>
    </ligandPart>
</feature>
<feature type="binding site" evidence="1">
    <location>
        <position position="254"/>
    </location>
    <ligand>
        <name>substrate</name>
    </ligand>
</feature>
<reference key="1">
    <citation type="journal article" date="2005" name="J. Bacteriol.">
        <title>Insights into genome plasticity and pathogenicity of the plant pathogenic Bacterium Xanthomonas campestris pv. vesicatoria revealed by the complete genome sequence.</title>
        <authorList>
            <person name="Thieme F."/>
            <person name="Koebnik R."/>
            <person name="Bekel T."/>
            <person name="Berger C."/>
            <person name="Boch J."/>
            <person name="Buettner D."/>
            <person name="Caldana C."/>
            <person name="Gaigalat L."/>
            <person name="Goesmann A."/>
            <person name="Kay S."/>
            <person name="Kirchner O."/>
            <person name="Lanz C."/>
            <person name="Linke B."/>
            <person name="McHardy A.C."/>
            <person name="Meyer F."/>
            <person name="Mittenhuber G."/>
            <person name="Nies D.H."/>
            <person name="Niesbach-Kloesgen U."/>
            <person name="Patschkowski T."/>
            <person name="Rueckert C."/>
            <person name="Rupp O."/>
            <person name="Schneiker S."/>
            <person name="Schuster S.C."/>
            <person name="Vorhoelter F.J."/>
            <person name="Weber E."/>
            <person name="Puehler A."/>
            <person name="Bonas U."/>
            <person name="Bartels D."/>
            <person name="Kaiser O."/>
        </authorList>
    </citation>
    <scope>NUCLEOTIDE SEQUENCE [LARGE SCALE GENOMIC DNA]</scope>
    <source>
        <strain>85-10</strain>
    </source>
</reference>
<accession>Q3BYF4</accession>
<keyword id="KW-0223">Dioxygenase</keyword>
<keyword id="KW-0349">Heme</keyword>
<keyword id="KW-0408">Iron</keyword>
<keyword id="KW-0479">Metal-binding</keyword>
<keyword id="KW-0560">Oxidoreductase</keyword>
<keyword id="KW-0823">Tryptophan catabolism</keyword>
<evidence type="ECO:0000255" key="1">
    <source>
        <dbReference type="HAMAP-Rule" id="MF_01972"/>
    </source>
</evidence>
<evidence type="ECO:0000305" key="2"/>
<organism>
    <name type="scientific">Xanthomonas euvesicatoria pv. vesicatoria (strain 85-10)</name>
    <name type="common">Xanthomonas campestris pv. vesicatoria</name>
    <dbReference type="NCBI Taxonomy" id="316273"/>
    <lineage>
        <taxon>Bacteria</taxon>
        <taxon>Pseudomonadati</taxon>
        <taxon>Pseudomonadota</taxon>
        <taxon>Gammaproteobacteria</taxon>
        <taxon>Lysobacterales</taxon>
        <taxon>Lysobacteraceae</taxon>
        <taxon>Xanthomonas</taxon>
    </lineage>
</organism>